<gene>
    <name type="primary">zfr</name>
</gene>
<sequence length="1074" mass="116523">MIPICPVVSFTYVPSRLGEDAKMATGNYFGFTHGAGAQYSQQPAAGVAYTHPTTVASYTVHQAPVAAHTVAAAYAPTAATVAVARPAPVAVAAAANAAAFGGYQPAHAATDYGYAQRQPEVPPPPPPVTSQNYQDSYSYVRSTAPAVAYDSKQYYQQPAATPAVAAAAAQPQPTVAESYYQTAPKTGYSQGATPYTQTQQTRQVTVVKPATPSPATSTFSIYPVSSAVQPVAAAAAASVVPSYSQSPTYSTNAVTYSGTSYSGYEAAVYSAASSYYQQQQQQQKQAAVAAAATAAWTGSTFTKKTPFQNKTLKPKQPPKPPQIHYCDVCKISCAGPQTYKEHLEGQKHKKKEAALKVSQSSSSSSGGGSSARGTQNQLRCELCDVSCTGADAYAAHIRGAKHQKVVKLHTKLGKPIPSTEPSVVSQSSTSSTAAPNKTSSSNINSSTSTSSNASSSVSASYLKSGSMAASAAQGKSSGANNVSVNSSSIKKVNTPKINFVGGNKLQTTASKSDESKADAAKTAQSAASAPAADAKNDMPDPMSPQSALAALQSDVQPVGHDYVEEVRNDEGKVIRFHCKLCECSFNDPNAKEMHLKGRRHRLQYKKKVNPDLQVEVKPSIRARKIQEEKMRKQMQKEEYWRRREEEERWRMEMRRYEEDMYWRRMEEEQHHWEDRRRMPDGGYPQGPPGPPGLLGVRPGMPIPQPQGPVPPRRPDSSDDRYVMTKHAAIYPSEDELQAIQKIVSITERALKLVSDIITDQDAGASAKGKEEDKEKKEPPKDRLLKGVMRVGVLAKGLLLRGDKEVNLVLLCSEKPTKNLLTRIVEHLPKQLTMVTPEKYEVKGSIQESAIILTSCGDPKMQVTITLTSPIIREESSRDGDVTSSMVKDPADVLDRQKCLDALAALRHAKWFQARANGLQSCVIVIRILRDLCQRVPTWSAFPSWAMELLVEKAISSASGPMSPGDALRRVFECISSGILLSGAPGLIDPCEKNPTDTLAFMEEQQREDITSSAQFALRLLAFRQIHKVLGMDPLPQMNSRFNVRNTRKRRRDNSDGADGFEAEGKKDKKDYEGF</sequence>
<name>ZFR_DANRE</name>
<evidence type="ECO:0000250" key="1"/>
<evidence type="ECO:0000255" key="2">
    <source>
        <dbReference type="PROSITE-ProRule" id="PRU01040"/>
    </source>
</evidence>
<evidence type="ECO:0000256" key="3">
    <source>
        <dbReference type="SAM" id="MobiDB-lite"/>
    </source>
</evidence>
<evidence type="ECO:0000305" key="4"/>
<comment type="function">
    <text evidence="1">Involved in postimplantation and gastrulation stages of development. Binds to DNA and RNA (By similarity).</text>
</comment>
<comment type="subcellular location">
    <subcellularLocation>
        <location>Nucleus</location>
    </subcellularLocation>
    <subcellularLocation>
        <location evidence="1">Cytoplasm</location>
    </subcellularLocation>
</comment>
<comment type="sequence caution" evidence="4">
    <conflict type="erroneous initiation">
        <sequence resource="EMBL-CDS" id="AAH59198"/>
    </conflict>
</comment>
<proteinExistence type="evidence at transcript level"/>
<keyword id="KW-0963">Cytoplasm</keyword>
<keyword id="KW-0217">Developmental protein</keyword>
<keyword id="KW-0238">DNA-binding</keyword>
<keyword id="KW-0539">Nucleus</keyword>
<keyword id="KW-1185">Reference proteome</keyword>
<keyword id="KW-0677">Repeat</keyword>
<keyword id="KW-0694">RNA-binding</keyword>
<dbReference type="EMBL" id="BC059198">
    <property type="protein sequence ID" value="AAH59198.1"/>
    <property type="status" value="ALT_INIT"/>
    <property type="molecule type" value="mRNA"/>
</dbReference>
<dbReference type="SMR" id="Q6PCR6"/>
<dbReference type="FunCoup" id="Q6PCR6">
    <property type="interactions" value="2637"/>
</dbReference>
<dbReference type="STRING" id="7955.ENSDARP00000069275"/>
<dbReference type="PaxDb" id="7955-ENSDARP00000069275"/>
<dbReference type="AGR" id="ZFIN:ZDB-GENE-030131-378"/>
<dbReference type="ZFIN" id="ZDB-GENE-030131-378">
    <property type="gene designation" value="zfr"/>
</dbReference>
<dbReference type="eggNOG" id="KOG3792">
    <property type="taxonomic scope" value="Eukaryota"/>
</dbReference>
<dbReference type="InParanoid" id="Q6PCR6"/>
<dbReference type="PhylomeDB" id="Q6PCR6"/>
<dbReference type="PRO" id="PR:Q6PCR6"/>
<dbReference type="Proteomes" id="UP000000437">
    <property type="component" value="Unplaced"/>
</dbReference>
<dbReference type="GO" id="GO:0005737">
    <property type="term" value="C:cytoplasm"/>
    <property type="evidence" value="ECO:0007669"/>
    <property type="project" value="UniProtKB-SubCell"/>
</dbReference>
<dbReference type="GO" id="GO:0005634">
    <property type="term" value="C:nucleus"/>
    <property type="evidence" value="ECO:0007669"/>
    <property type="project" value="UniProtKB-SubCell"/>
</dbReference>
<dbReference type="GO" id="GO:0003677">
    <property type="term" value="F:DNA binding"/>
    <property type="evidence" value="ECO:0007669"/>
    <property type="project" value="UniProtKB-KW"/>
</dbReference>
<dbReference type="GO" id="GO:0003725">
    <property type="term" value="F:double-stranded RNA binding"/>
    <property type="evidence" value="ECO:0000318"/>
    <property type="project" value="GO_Central"/>
</dbReference>
<dbReference type="GO" id="GO:0003727">
    <property type="term" value="F:single-stranded RNA binding"/>
    <property type="evidence" value="ECO:0000318"/>
    <property type="project" value="GO_Central"/>
</dbReference>
<dbReference type="GO" id="GO:0008270">
    <property type="term" value="F:zinc ion binding"/>
    <property type="evidence" value="ECO:0007669"/>
    <property type="project" value="InterPro"/>
</dbReference>
<dbReference type="FunFam" id="1.10.1410.40:FF:000001">
    <property type="entry name" value="interleukin enhancer-binding factor 3 isoform X1"/>
    <property type="match status" value="1"/>
</dbReference>
<dbReference type="FunFam" id="3.30.160.60:FF:000153">
    <property type="entry name" value="Zinc finger RNA-binding protein 2"/>
    <property type="match status" value="1"/>
</dbReference>
<dbReference type="FunFam" id="3.30.160.60:FF:000210">
    <property type="entry name" value="Zinc finger RNA-binding protein 2"/>
    <property type="match status" value="1"/>
</dbReference>
<dbReference type="FunFam" id="3.30.160.60:FF:000439">
    <property type="entry name" value="Zinc finger RNA-binding protein 2"/>
    <property type="match status" value="1"/>
</dbReference>
<dbReference type="FunFam" id="3.30.460.10:FF:000010">
    <property type="entry name" value="Zinc finger RNA-binding protein 2"/>
    <property type="match status" value="1"/>
</dbReference>
<dbReference type="Gene3D" id="1.10.1410.40">
    <property type="match status" value="1"/>
</dbReference>
<dbReference type="Gene3D" id="3.30.460.10">
    <property type="entry name" value="Beta Polymerase, domain 2"/>
    <property type="match status" value="1"/>
</dbReference>
<dbReference type="Gene3D" id="3.30.160.60">
    <property type="entry name" value="Classic Zinc Finger"/>
    <property type="match status" value="3"/>
</dbReference>
<dbReference type="InterPro" id="IPR006561">
    <property type="entry name" value="DZF_dom"/>
</dbReference>
<dbReference type="InterPro" id="IPR049402">
    <property type="entry name" value="DZF_dom_C"/>
</dbReference>
<dbReference type="InterPro" id="IPR049401">
    <property type="entry name" value="DZF_dom_N"/>
</dbReference>
<dbReference type="InterPro" id="IPR003604">
    <property type="entry name" value="Matrin/U1-like-C_Znf_C2H2"/>
</dbReference>
<dbReference type="InterPro" id="IPR043519">
    <property type="entry name" value="NT_sf"/>
</dbReference>
<dbReference type="InterPro" id="IPR036236">
    <property type="entry name" value="Znf_C2H2_sf"/>
</dbReference>
<dbReference type="InterPro" id="IPR013087">
    <property type="entry name" value="Znf_C2H2_type"/>
</dbReference>
<dbReference type="PANTHER" id="PTHR45762">
    <property type="entry name" value="ZINC FINGER RNA-BINDING PROTEIN"/>
    <property type="match status" value="1"/>
</dbReference>
<dbReference type="PANTHER" id="PTHR45762:SF21">
    <property type="entry name" value="ZINC FINGER RNA-BINDING PROTEIN"/>
    <property type="match status" value="1"/>
</dbReference>
<dbReference type="Pfam" id="PF20965">
    <property type="entry name" value="DZF_C"/>
    <property type="match status" value="1"/>
</dbReference>
<dbReference type="Pfam" id="PF07528">
    <property type="entry name" value="DZF_N"/>
    <property type="match status" value="1"/>
</dbReference>
<dbReference type="Pfam" id="PF12874">
    <property type="entry name" value="zf-met"/>
    <property type="match status" value="3"/>
</dbReference>
<dbReference type="SMART" id="SM00572">
    <property type="entry name" value="DZF"/>
    <property type="match status" value="1"/>
</dbReference>
<dbReference type="SMART" id="SM00355">
    <property type="entry name" value="ZnF_C2H2"/>
    <property type="match status" value="3"/>
</dbReference>
<dbReference type="SMART" id="SM00451">
    <property type="entry name" value="ZnF_U1"/>
    <property type="match status" value="3"/>
</dbReference>
<dbReference type="SUPFAM" id="SSF57667">
    <property type="entry name" value="beta-beta-alpha zinc fingers"/>
    <property type="match status" value="3"/>
</dbReference>
<dbReference type="PROSITE" id="PS51703">
    <property type="entry name" value="DZF"/>
    <property type="match status" value="1"/>
</dbReference>
<dbReference type="PROSITE" id="PS00028">
    <property type="entry name" value="ZINC_FINGER_C2H2_1"/>
    <property type="match status" value="3"/>
</dbReference>
<reference key="1">
    <citation type="submission" date="2003-10" db="EMBL/GenBank/DDBJ databases">
        <authorList>
            <consortium name="NIH - Zebrafish Gene Collection (ZGC) project"/>
        </authorList>
    </citation>
    <scope>NUCLEOTIDE SEQUENCE [LARGE SCALE MRNA]</scope>
    <source>
        <strain>AB</strain>
    </source>
</reference>
<feature type="chain" id="PRO_0000312723" description="Zinc finger RNA-binding protein">
    <location>
        <begin position="1"/>
        <end position="1074"/>
    </location>
</feature>
<feature type="domain" description="DZF" evidence="2">
    <location>
        <begin position="697"/>
        <end position="1073"/>
    </location>
</feature>
<feature type="region of interest" description="Disordered" evidence="3">
    <location>
        <begin position="344"/>
        <end position="374"/>
    </location>
</feature>
<feature type="region of interest" description="Disordered" evidence="3">
    <location>
        <begin position="412"/>
        <end position="456"/>
    </location>
</feature>
<feature type="region of interest" description="Disordered" evidence="3">
    <location>
        <begin position="508"/>
        <end position="545"/>
    </location>
</feature>
<feature type="region of interest" description="Disordered" evidence="3">
    <location>
        <begin position="697"/>
        <end position="718"/>
    </location>
</feature>
<feature type="region of interest" description="Disordered" evidence="3">
    <location>
        <begin position="761"/>
        <end position="781"/>
    </location>
</feature>
<feature type="region of interest" description="Disordered" evidence="3">
    <location>
        <begin position="1036"/>
        <end position="1074"/>
    </location>
</feature>
<feature type="compositionally biased region" description="Low complexity" evidence="3">
    <location>
        <begin position="417"/>
        <end position="456"/>
    </location>
</feature>
<feature type="compositionally biased region" description="Low complexity" evidence="3">
    <location>
        <begin position="520"/>
        <end position="533"/>
    </location>
</feature>
<feature type="compositionally biased region" description="Pro residues" evidence="3">
    <location>
        <begin position="700"/>
        <end position="711"/>
    </location>
</feature>
<feature type="compositionally biased region" description="Basic and acidic residues" evidence="3">
    <location>
        <begin position="767"/>
        <end position="781"/>
    </location>
</feature>
<feature type="compositionally biased region" description="Basic and acidic residues" evidence="3">
    <location>
        <begin position="1062"/>
        <end position="1074"/>
    </location>
</feature>
<accession>Q6PCR6</accession>
<organism>
    <name type="scientific">Danio rerio</name>
    <name type="common">Zebrafish</name>
    <name type="synonym">Brachydanio rerio</name>
    <dbReference type="NCBI Taxonomy" id="7955"/>
    <lineage>
        <taxon>Eukaryota</taxon>
        <taxon>Metazoa</taxon>
        <taxon>Chordata</taxon>
        <taxon>Craniata</taxon>
        <taxon>Vertebrata</taxon>
        <taxon>Euteleostomi</taxon>
        <taxon>Actinopterygii</taxon>
        <taxon>Neopterygii</taxon>
        <taxon>Teleostei</taxon>
        <taxon>Ostariophysi</taxon>
        <taxon>Cypriniformes</taxon>
        <taxon>Danionidae</taxon>
        <taxon>Danioninae</taxon>
        <taxon>Danio</taxon>
    </lineage>
</organism>
<protein>
    <recommendedName>
        <fullName>Zinc finger RNA-binding protein</fullName>
    </recommendedName>
</protein>